<accession>B4RLE8</accession>
<dbReference type="EC" id="2.7.2.11" evidence="1"/>
<dbReference type="EMBL" id="CP001050">
    <property type="protein sequence ID" value="ACF29635.1"/>
    <property type="molecule type" value="Genomic_DNA"/>
</dbReference>
<dbReference type="SMR" id="B4RLE8"/>
<dbReference type="KEGG" id="ngk:NGK_0958"/>
<dbReference type="HOGENOM" id="CLU_025400_0_2_4"/>
<dbReference type="UniPathway" id="UPA00098">
    <property type="reaction ID" value="UER00359"/>
</dbReference>
<dbReference type="Proteomes" id="UP000002564">
    <property type="component" value="Chromosome"/>
</dbReference>
<dbReference type="GO" id="GO:0005829">
    <property type="term" value="C:cytosol"/>
    <property type="evidence" value="ECO:0007669"/>
    <property type="project" value="TreeGrafter"/>
</dbReference>
<dbReference type="GO" id="GO:0005524">
    <property type="term" value="F:ATP binding"/>
    <property type="evidence" value="ECO:0007669"/>
    <property type="project" value="UniProtKB-KW"/>
</dbReference>
<dbReference type="GO" id="GO:0004349">
    <property type="term" value="F:glutamate 5-kinase activity"/>
    <property type="evidence" value="ECO:0007669"/>
    <property type="project" value="UniProtKB-UniRule"/>
</dbReference>
<dbReference type="GO" id="GO:0055129">
    <property type="term" value="P:L-proline biosynthetic process"/>
    <property type="evidence" value="ECO:0007669"/>
    <property type="project" value="UniProtKB-UniRule"/>
</dbReference>
<dbReference type="CDD" id="cd04242">
    <property type="entry name" value="AAK_G5K_ProB"/>
    <property type="match status" value="1"/>
</dbReference>
<dbReference type="FunFam" id="3.40.1160.10:FF:000018">
    <property type="entry name" value="Glutamate 5-kinase"/>
    <property type="match status" value="1"/>
</dbReference>
<dbReference type="Gene3D" id="3.40.1160.10">
    <property type="entry name" value="Acetylglutamate kinase-like"/>
    <property type="match status" value="1"/>
</dbReference>
<dbReference type="HAMAP" id="MF_00456">
    <property type="entry name" value="ProB"/>
    <property type="match status" value="1"/>
</dbReference>
<dbReference type="InterPro" id="IPR036393">
    <property type="entry name" value="AceGlu_kinase-like_sf"/>
</dbReference>
<dbReference type="InterPro" id="IPR001048">
    <property type="entry name" value="Asp/Glu/Uridylate_kinase"/>
</dbReference>
<dbReference type="InterPro" id="IPR041739">
    <property type="entry name" value="G5K_ProB"/>
</dbReference>
<dbReference type="InterPro" id="IPR001057">
    <property type="entry name" value="Glu/AcGlu_kinase"/>
</dbReference>
<dbReference type="InterPro" id="IPR011529">
    <property type="entry name" value="Glu_5kinase"/>
</dbReference>
<dbReference type="InterPro" id="IPR005715">
    <property type="entry name" value="Glu_5kinase/COase_Synthase"/>
</dbReference>
<dbReference type="InterPro" id="IPR019797">
    <property type="entry name" value="Glutamate_5-kinase_CS"/>
</dbReference>
<dbReference type="NCBIfam" id="TIGR01027">
    <property type="entry name" value="proB"/>
    <property type="match status" value="1"/>
</dbReference>
<dbReference type="PANTHER" id="PTHR43654">
    <property type="entry name" value="GLUTAMATE 5-KINASE"/>
    <property type="match status" value="1"/>
</dbReference>
<dbReference type="PANTHER" id="PTHR43654:SF1">
    <property type="entry name" value="ISOPENTENYL PHOSPHATE KINASE"/>
    <property type="match status" value="1"/>
</dbReference>
<dbReference type="Pfam" id="PF00696">
    <property type="entry name" value="AA_kinase"/>
    <property type="match status" value="1"/>
</dbReference>
<dbReference type="PIRSF" id="PIRSF000729">
    <property type="entry name" value="GK"/>
    <property type="match status" value="1"/>
</dbReference>
<dbReference type="PRINTS" id="PR00474">
    <property type="entry name" value="GLU5KINASE"/>
</dbReference>
<dbReference type="SUPFAM" id="SSF53633">
    <property type="entry name" value="Carbamate kinase-like"/>
    <property type="match status" value="1"/>
</dbReference>
<dbReference type="PROSITE" id="PS00902">
    <property type="entry name" value="GLUTAMATE_5_KINASE"/>
    <property type="match status" value="1"/>
</dbReference>
<name>PROB_NEIG2</name>
<organism>
    <name type="scientific">Neisseria gonorrhoeae (strain NCCP11945)</name>
    <dbReference type="NCBI Taxonomy" id="521006"/>
    <lineage>
        <taxon>Bacteria</taxon>
        <taxon>Pseudomonadati</taxon>
        <taxon>Pseudomonadota</taxon>
        <taxon>Betaproteobacteria</taxon>
        <taxon>Neisseriales</taxon>
        <taxon>Neisseriaceae</taxon>
        <taxon>Neisseria</taxon>
    </lineage>
</organism>
<evidence type="ECO:0000255" key="1">
    <source>
        <dbReference type="HAMAP-Rule" id="MF_00456"/>
    </source>
</evidence>
<feature type="chain" id="PRO_1000125245" description="Glutamate 5-kinase">
    <location>
        <begin position="1"/>
        <end position="295"/>
    </location>
</feature>
<feature type="binding site" evidence="1">
    <location>
        <position position="9"/>
    </location>
    <ligand>
        <name>ATP</name>
        <dbReference type="ChEBI" id="CHEBI:30616"/>
    </ligand>
</feature>
<feature type="binding site" evidence="1">
    <location>
        <position position="49"/>
    </location>
    <ligand>
        <name>substrate</name>
    </ligand>
</feature>
<feature type="binding site" evidence="1">
    <location>
        <position position="136"/>
    </location>
    <ligand>
        <name>substrate</name>
    </ligand>
</feature>
<feature type="binding site" evidence="1">
    <location>
        <position position="148"/>
    </location>
    <ligand>
        <name>substrate</name>
    </ligand>
</feature>
<feature type="binding site" evidence="1">
    <location>
        <begin position="168"/>
        <end position="169"/>
    </location>
    <ligand>
        <name>ATP</name>
        <dbReference type="ChEBI" id="CHEBI:30616"/>
    </ligand>
</feature>
<feature type="binding site" evidence="1">
    <location>
        <begin position="210"/>
        <end position="216"/>
    </location>
    <ligand>
        <name>ATP</name>
        <dbReference type="ChEBI" id="CHEBI:30616"/>
    </ligand>
</feature>
<keyword id="KW-0028">Amino-acid biosynthesis</keyword>
<keyword id="KW-0067">ATP-binding</keyword>
<keyword id="KW-0963">Cytoplasm</keyword>
<keyword id="KW-0418">Kinase</keyword>
<keyword id="KW-0547">Nucleotide-binding</keyword>
<keyword id="KW-0641">Proline biosynthesis</keyword>
<keyword id="KW-0808">Transferase</keyword>
<proteinExistence type="inferred from homology"/>
<protein>
    <recommendedName>
        <fullName evidence="1">Glutamate 5-kinase</fullName>
        <ecNumber evidence="1">2.7.2.11</ecNumber>
    </recommendedName>
    <alternativeName>
        <fullName evidence="1">Gamma-glutamyl kinase</fullName>
        <shortName evidence="1">GK</shortName>
    </alternativeName>
</protein>
<gene>
    <name evidence="1" type="primary">proB</name>
    <name type="ordered locus">NGK_0958</name>
</gene>
<sequence>MKYKRIVFKVGTSSITRSDGSLSRGKIQTITRQLAALHRAGHELVLVSSGAVAAGFGALGFKKRPVKIADKQASAAVGQGLLMEEYTANLSSDGIVSAQILLSRADFADKRRYQNAGGALSVLLQRRAIPIINENDTVSVEELKIGDNDTLSAQVAAMIQADLLVLLTDIDDLYTGNPNSNPDAVRLDKIEHINHEIIKMAGGSGSANGTGGMLTKIKAATIAAESGVPVYICSSLKPDSLAEAAEHQADGSFFVPRAKGLRTQKQWLAFYSESRGSVYVDEGAEHALSEQGKAC</sequence>
<reference key="1">
    <citation type="journal article" date="2008" name="J. Bacteriol.">
        <title>Complete genome sequence of Neisseria gonorrhoeae NCCP11945.</title>
        <authorList>
            <person name="Chung G.T."/>
            <person name="Yoo J.S."/>
            <person name="Oh H.B."/>
            <person name="Lee Y.S."/>
            <person name="Cha S.H."/>
            <person name="Kim S.J."/>
            <person name="Yoo C.K."/>
        </authorList>
    </citation>
    <scope>NUCLEOTIDE SEQUENCE [LARGE SCALE GENOMIC DNA]</scope>
    <source>
        <strain>NCCP11945</strain>
    </source>
</reference>
<comment type="function">
    <text evidence="1">Catalyzes the transfer of a phosphate group to glutamate to form L-glutamate 5-phosphate.</text>
</comment>
<comment type="catalytic activity">
    <reaction evidence="1">
        <text>L-glutamate + ATP = L-glutamyl 5-phosphate + ADP</text>
        <dbReference type="Rhea" id="RHEA:14877"/>
        <dbReference type="ChEBI" id="CHEBI:29985"/>
        <dbReference type="ChEBI" id="CHEBI:30616"/>
        <dbReference type="ChEBI" id="CHEBI:58274"/>
        <dbReference type="ChEBI" id="CHEBI:456216"/>
        <dbReference type="EC" id="2.7.2.11"/>
    </reaction>
</comment>
<comment type="pathway">
    <text evidence="1">Amino-acid biosynthesis; L-proline biosynthesis; L-glutamate 5-semialdehyde from L-glutamate: step 1/2.</text>
</comment>
<comment type="subcellular location">
    <subcellularLocation>
        <location evidence="1">Cytoplasm</location>
    </subcellularLocation>
</comment>
<comment type="similarity">
    <text evidence="1">Belongs to the glutamate 5-kinase family.</text>
</comment>